<accession>Q5QT56</accession>
<accession>Q6AY67</accession>
<sequence length="224" mass="23315">MANSGLQLLGYFLALGGWVGIIASTALPQWKQSSYAGDAIITAVGLYEGLWMSCASQSTGQVQCKLYDSLLALDGHIQSARALMVVAVLLGFVAMVLSVVGMKCTRVGDSNPTAKGRVAISGGALFLLAGLCTLTAVSWYATLVTQEFFNPSTPVNARYEFGPALFVGWASAGLAILGGSFLCCTCPEPERANSIPQPYRSGPSTAAREPVVKLSTSVKGPLGV</sequence>
<proteinExistence type="evidence at transcript level"/>
<gene>
    <name evidence="9" type="primary">Cldn19</name>
</gene>
<keyword id="KW-0025">Alternative splicing</keyword>
<keyword id="KW-0965">Cell junction</keyword>
<keyword id="KW-1003">Cell membrane</keyword>
<keyword id="KW-1015">Disulfide bond</keyword>
<keyword id="KW-0472">Membrane</keyword>
<keyword id="KW-1185">Reference proteome</keyword>
<keyword id="KW-0716">Sensory transduction</keyword>
<keyword id="KW-0796">Tight junction</keyword>
<keyword id="KW-0812">Transmembrane</keyword>
<keyword id="KW-1133">Transmembrane helix</keyword>
<keyword id="KW-0844">Vision</keyword>
<reference key="1">
    <citation type="submission" date="2002-04" db="EMBL/GenBank/DDBJ databases">
        <title>Rat claudin-19.</title>
        <authorList>
            <person name="Morita K."/>
        </authorList>
    </citation>
    <scope>NUCLEOTIDE SEQUENCE [MRNA] (ISOFORM 1)</scope>
    <source>
        <strain>Wistar</strain>
    </source>
</reference>
<reference key="2">
    <citation type="journal article" date="2004" name="Genome Res.">
        <title>The status, quality, and expansion of the NIH full-length cDNA project: the Mammalian Gene Collection (MGC).</title>
        <authorList>
            <consortium name="The MGC Project Team"/>
        </authorList>
    </citation>
    <scope>NUCLEOTIDE SEQUENCE [LARGE SCALE MRNA] (ISOFORM 2)</scope>
    <source>
        <tissue>Kidney</tissue>
    </source>
</reference>
<organism>
    <name type="scientific">Rattus norvegicus</name>
    <name type="common">Rat</name>
    <dbReference type="NCBI Taxonomy" id="10116"/>
    <lineage>
        <taxon>Eukaryota</taxon>
        <taxon>Metazoa</taxon>
        <taxon>Chordata</taxon>
        <taxon>Craniata</taxon>
        <taxon>Vertebrata</taxon>
        <taxon>Euteleostomi</taxon>
        <taxon>Mammalia</taxon>
        <taxon>Eutheria</taxon>
        <taxon>Euarchontoglires</taxon>
        <taxon>Glires</taxon>
        <taxon>Rodentia</taxon>
        <taxon>Myomorpha</taxon>
        <taxon>Muroidea</taxon>
        <taxon>Muridae</taxon>
        <taxon>Murinae</taxon>
        <taxon>Rattus</taxon>
    </lineage>
</organism>
<comment type="function">
    <text evidence="1 4">Forms paracellular channels: coassembles with CLDN16 into tight junction strands with cation-selective channels through the strands, conveying epithelial permeability in a process known as paracellular tight junction permeability (By similarity). Involved in the maintenance of ion gradients along the nephron. In the thick ascending limb (TAL) of Henle's loop, facilitates sodium paracellular permeability from the interstitial compartment to the lumen, contributing to the lumen-positive transepithelial potential that drives paracellular magnesium and calcium reabsorption (By similarity). Forms paracellular barriers on its own. In the peripheral nervous system, represents a major constituent of the tight junctions in Schwann cells and contributes to electrical sealing. During retinal neurogenesis, may regulate the barrier properties of tight junctions in retinal pigment epithelium, required for proper retinal tissue differentiation and vision (By similarity).</text>
</comment>
<comment type="catalytic activity">
    <reaction evidence="1 4">
        <text>Mg(2+)(in) = Mg(2+)(out)</text>
        <dbReference type="Rhea" id="RHEA:29827"/>
        <dbReference type="ChEBI" id="CHEBI:18420"/>
    </reaction>
</comment>
<comment type="catalytic activity">
    <reaction evidence="3 4">
        <text>Ca(2+)(in) = Ca(2+)(out)</text>
        <dbReference type="Rhea" id="RHEA:29671"/>
        <dbReference type="ChEBI" id="CHEBI:29108"/>
    </reaction>
</comment>
<comment type="catalytic activity">
    <reaction evidence="1 4">
        <text>Na(+)(in) = Na(+)(out)</text>
        <dbReference type="Rhea" id="RHEA:34963"/>
        <dbReference type="ChEBI" id="CHEBI:29101"/>
    </reaction>
</comment>
<comment type="catalytic activity">
    <reaction evidence="4 5">
        <text>K(+)(in) = K(+)(out)</text>
        <dbReference type="Rhea" id="RHEA:29463"/>
        <dbReference type="ChEBI" id="CHEBI:29103"/>
    </reaction>
</comment>
<comment type="catalytic activity">
    <reaction evidence="5">
        <text>Rb(+)(in) = Rb(+)(out)</text>
        <dbReference type="Rhea" id="RHEA:78547"/>
        <dbReference type="ChEBI" id="CHEBI:49847"/>
    </reaction>
</comment>
<comment type="catalytic activity">
    <reaction evidence="5">
        <text>Cs(+)(in) = Cs(+)(out)</text>
        <dbReference type="Rhea" id="RHEA:78555"/>
        <dbReference type="ChEBI" id="CHEBI:49547"/>
    </reaction>
</comment>
<comment type="catalytic activity">
    <reaction evidence="3">
        <text>Li(+)(in) = Li(+)(out)</text>
        <dbReference type="Rhea" id="RHEA:78551"/>
        <dbReference type="ChEBI" id="CHEBI:49713"/>
    </reaction>
</comment>
<comment type="subunit">
    <text evidence="1 2 5">Can form homo- and heteropolymeric tight junction strands. Interacts with other claudins including CLDN3, CLDN10, CLDN16 and CLDN18 with highest affinity for CLDN16 (By similarity). Interacts (via PDZ-binding motif TRV) with TJP1 (via PDZ domain) (By similarity).</text>
</comment>
<comment type="subcellular location">
    <subcellularLocation>
        <location evidence="1">Cell junction</location>
        <location evidence="1">Tight junction</location>
    </subcellularLocation>
    <subcellularLocation>
        <location evidence="1">Cell membrane</location>
        <topology evidence="6">Multi-pass membrane protein</topology>
    </subcellularLocation>
    <text evidence="1">Cotrafficks with CLDN16 from ER to tight junctions. Colocalizes with CLDN16 and CLDN3 in cell-cell contact areas of the TAL spatially separated from CLDN10b paracellular channels.</text>
</comment>
<comment type="alternative products">
    <event type="alternative splicing"/>
    <isoform>
        <id>Q5QT56-1</id>
        <name>1</name>
        <sequence type="displayed"/>
    </isoform>
    <isoform>
        <id>Q5QT56-2</id>
        <name>2</name>
        <sequence type="described" ref="VSP_013231"/>
    </isoform>
</comment>
<comment type="similarity">
    <text evidence="8">Belongs to the claudin family.</text>
</comment>
<name>CLD19_RAT</name>
<protein>
    <recommendedName>
        <fullName>Claudin-19</fullName>
    </recommendedName>
</protein>
<feature type="chain" id="PRO_0000144783" description="Claudin-19">
    <location>
        <begin position="1"/>
        <end position="224"/>
    </location>
</feature>
<feature type="topological domain" description="Cytoplasmic" evidence="6">
    <location>
        <begin position="1"/>
        <end position="7"/>
    </location>
</feature>
<feature type="transmembrane region" description="Helical" evidence="6">
    <location>
        <begin position="8"/>
        <end position="28"/>
    </location>
</feature>
<feature type="topological domain" description="Extracellular" evidence="6">
    <location>
        <begin position="29"/>
        <end position="81"/>
    </location>
</feature>
<feature type="transmembrane region" description="Helical" evidence="6">
    <location>
        <begin position="82"/>
        <end position="102"/>
    </location>
</feature>
<feature type="topological domain" description="Cytoplasmic" evidence="6">
    <location>
        <begin position="103"/>
        <end position="117"/>
    </location>
</feature>
<feature type="transmembrane region" description="Helical" evidence="6">
    <location>
        <begin position="118"/>
        <end position="138"/>
    </location>
</feature>
<feature type="topological domain" description="Extracellular" evidence="6">
    <location>
        <begin position="139"/>
        <end position="160"/>
    </location>
</feature>
<feature type="transmembrane region" description="Helical" evidence="6">
    <location>
        <begin position="161"/>
        <end position="181"/>
    </location>
</feature>
<feature type="topological domain" description="Cytoplasmic" evidence="6">
    <location>
        <begin position="182"/>
        <end position="224"/>
    </location>
</feature>
<feature type="disulfide bond" evidence="4">
    <location>
        <begin position="54"/>
        <end position="64"/>
    </location>
</feature>
<feature type="splice variant" id="VSP_013231" description="In isoform 2." evidence="7">
    <original>PVVKLSTSVKGPLGV</original>
    <variation>YV</variation>
    <location>
        <begin position="210"/>
        <end position="224"/>
    </location>
</feature>
<dbReference type="EMBL" id="AF497645">
    <property type="protein sequence ID" value="AAQ07257.1"/>
    <property type="molecule type" value="mRNA"/>
</dbReference>
<dbReference type="EMBL" id="BC079172">
    <property type="protein sequence ID" value="AAH79172.1"/>
    <property type="molecule type" value="mRNA"/>
</dbReference>
<dbReference type="RefSeq" id="NP_001008514.1">
    <molecule id="Q5QT56-2"/>
    <property type="nucleotide sequence ID" value="NM_001008514.1"/>
</dbReference>
<dbReference type="RefSeq" id="XP_006238818.1">
    <molecule id="Q5QT56-1"/>
    <property type="nucleotide sequence ID" value="XM_006238756.5"/>
</dbReference>
<dbReference type="SMR" id="Q5QT56"/>
<dbReference type="FunCoup" id="Q5QT56">
    <property type="interactions" value="318"/>
</dbReference>
<dbReference type="STRING" id="10116.ENSRNOP00000050261"/>
<dbReference type="iPTMnet" id="Q5QT56"/>
<dbReference type="PhosphoSitePlus" id="Q5QT56"/>
<dbReference type="PaxDb" id="10116-ENSRNOP00000050261"/>
<dbReference type="Ensembl" id="ENSRNOT00000047151.3">
    <molecule id="Q5QT56-1"/>
    <property type="protein sequence ID" value="ENSRNOP00000050261.1"/>
    <property type="gene ID" value="ENSRNOG00000007922.8"/>
</dbReference>
<dbReference type="Ensembl" id="ENSRNOT00000113733.1">
    <molecule id="Q5QT56-2"/>
    <property type="protein sequence ID" value="ENSRNOP00000080206.1"/>
    <property type="gene ID" value="ENSRNOG00000007922.8"/>
</dbReference>
<dbReference type="GeneID" id="298487"/>
<dbReference type="KEGG" id="rno:298487"/>
<dbReference type="UCSC" id="RGD:1305000">
    <molecule id="Q5QT56-1"/>
    <property type="organism name" value="rat"/>
</dbReference>
<dbReference type="AGR" id="RGD:1305000"/>
<dbReference type="CTD" id="149461"/>
<dbReference type="RGD" id="1305000">
    <property type="gene designation" value="Cldn19"/>
</dbReference>
<dbReference type="eggNOG" id="ENOG502QTG5">
    <property type="taxonomic scope" value="Eukaryota"/>
</dbReference>
<dbReference type="GeneTree" id="ENSGT00940000158624"/>
<dbReference type="HOGENOM" id="CLU_076370_2_0_1"/>
<dbReference type="InParanoid" id="Q5QT56"/>
<dbReference type="OMA" id="KRGNQCV"/>
<dbReference type="OrthoDB" id="10025519at2759"/>
<dbReference type="PhylomeDB" id="Q5QT56"/>
<dbReference type="TreeFam" id="TF331936"/>
<dbReference type="PRO" id="PR:Q5QT56"/>
<dbReference type="Proteomes" id="UP000002494">
    <property type="component" value="Chromosome 5"/>
</dbReference>
<dbReference type="Bgee" id="ENSRNOG00000007922">
    <property type="expression patterns" value="Expressed in adult mammalian kidney and 6 other cell types or tissues"/>
</dbReference>
<dbReference type="GO" id="GO:0043296">
    <property type="term" value="C:apical junction complex"/>
    <property type="evidence" value="ECO:0000266"/>
    <property type="project" value="RGD"/>
</dbReference>
<dbReference type="GO" id="GO:0016323">
    <property type="term" value="C:basolateral plasma membrane"/>
    <property type="evidence" value="ECO:0000266"/>
    <property type="project" value="RGD"/>
</dbReference>
<dbReference type="GO" id="GO:0005923">
    <property type="term" value="C:bicellular tight junction"/>
    <property type="evidence" value="ECO:0000266"/>
    <property type="project" value="RGD"/>
</dbReference>
<dbReference type="GO" id="GO:0030054">
    <property type="term" value="C:cell junction"/>
    <property type="evidence" value="ECO:0000266"/>
    <property type="project" value="RGD"/>
</dbReference>
<dbReference type="GO" id="GO:0005737">
    <property type="term" value="C:cytoplasm"/>
    <property type="evidence" value="ECO:0000266"/>
    <property type="project" value="RGD"/>
</dbReference>
<dbReference type="GO" id="GO:0097453">
    <property type="term" value="C:mesaxon"/>
    <property type="evidence" value="ECO:0000266"/>
    <property type="project" value="RGD"/>
</dbReference>
<dbReference type="GO" id="GO:0005634">
    <property type="term" value="C:nucleus"/>
    <property type="evidence" value="ECO:0000266"/>
    <property type="project" value="RGD"/>
</dbReference>
<dbReference type="GO" id="GO:0033010">
    <property type="term" value="C:paranodal junction"/>
    <property type="evidence" value="ECO:0000266"/>
    <property type="project" value="RGD"/>
</dbReference>
<dbReference type="GO" id="GO:0048471">
    <property type="term" value="C:perinuclear region of cytoplasm"/>
    <property type="evidence" value="ECO:0000266"/>
    <property type="project" value="RGD"/>
</dbReference>
<dbReference type="GO" id="GO:0005886">
    <property type="term" value="C:plasma membrane"/>
    <property type="evidence" value="ECO:0000250"/>
    <property type="project" value="UniProtKB"/>
</dbReference>
<dbReference type="GO" id="GO:0043220">
    <property type="term" value="C:Schmidt-Lanterman incisure"/>
    <property type="evidence" value="ECO:0000266"/>
    <property type="project" value="RGD"/>
</dbReference>
<dbReference type="GO" id="GO:0070160">
    <property type="term" value="C:tight junction"/>
    <property type="evidence" value="ECO:0000250"/>
    <property type="project" value="UniProtKB"/>
</dbReference>
<dbReference type="GO" id="GO:0098632">
    <property type="term" value="F:cell-cell adhesion mediator activity"/>
    <property type="evidence" value="ECO:0000266"/>
    <property type="project" value="RGD"/>
</dbReference>
<dbReference type="GO" id="GO:0042802">
    <property type="term" value="F:identical protein binding"/>
    <property type="evidence" value="ECO:0000250"/>
    <property type="project" value="UniProtKB"/>
</dbReference>
<dbReference type="GO" id="GO:0160187">
    <property type="term" value="F:paracellular tight junction channel activity"/>
    <property type="evidence" value="ECO:0000250"/>
    <property type="project" value="UniProtKB"/>
</dbReference>
<dbReference type="GO" id="GO:0005198">
    <property type="term" value="F:structural molecule activity"/>
    <property type="evidence" value="ECO:0007669"/>
    <property type="project" value="InterPro"/>
</dbReference>
<dbReference type="GO" id="GO:0030036">
    <property type="term" value="P:actin cytoskeleton organization"/>
    <property type="evidence" value="ECO:0000266"/>
    <property type="project" value="RGD"/>
</dbReference>
<dbReference type="GO" id="GO:0043297">
    <property type="term" value="P:apical junction assembly"/>
    <property type="evidence" value="ECO:0000266"/>
    <property type="project" value="RGD"/>
</dbReference>
<dbReference type="GO" id="GO:0070830">
    <property type="term" value="P:bicellular tight junction assembly"/>
    <property type="evidence" value="ECO:0000318"/>
    <property type="project" value="GO_Central"/>
</dbReference>
<dbReference type="GO" id="GO:0007155">
    <property type="term" value="P:cell adhesion"/>
    <property type="evidence" value="ECO:0000318"/>
    <property type="project" value="GO_Central"/>
</dbReference>
<dbReference type="GO" id="GO:0034329">
    <property type="term" value="P:cell junction assembly"/>
    <property type="evidence" value="ECO:0000266"/>
    <property type="project" value="RGD"/>
</dbReference>
<dbReference type="GO" id="GO:0030336">
    <property type="term" value="P:negative regulation of cell migration"/>
    <property type="evidence" value="ECO:0000266"/>
    <property type="project" value="RGD"/>
</dbReference>
<dbReference type="GO" id="GO:0008285">
    <property type="term" value="P:negative regulation of cell population proliferation"/>
    <property type="evidence" value="ECO:0000266"/>
    <property type="project" value="RGD"/>
</dbReference>
<dbReference type="GO" id="GO:0010629">
    <property type="term" value="P:negative regulation of gene expression"/>
    <property type="evidence" value="ECO:0000266"/>
    <property type="project" value="RGD"/>
</dbReference>
<dbReference type="GO" id="GO:0019227">
    <property type="term" value="P:neuronal action potential propagation"/>
    <property type="evidence" value="ECO:0000266"/>
    <property type="project" value="RGD"/>
</dbReference>
<dbReference type="GO" id="GO:0160184">
    <property type="term" value="P:paracellular transport"/>
    <property type="evidence" value="ECO:0000250"/>
    <property type="project" value="UniProtKB"/>
</dbReference>
<dbReference type="GO" id="GO:0010628">
    <property type="term" value="P:positive regulation of gene expression"/>
    <property type="evidence" value="ECO:0000266"/>
    <property type="project" value="RGD"/>
</dbReference>
<dbReference type="GO" id="GO:0150111">
    <property type="term" value="P:regulation of transepithelial transport"/>
    <property type="evidence" value="ECO:0000266"/>
    <property type="project" value="RGD"/>
</dbReference>
<dbReference type="GO" id="GO:0070293">
    <property type="term" value="P:renal absorption"/>
    <property type="evidence" value="ECO:0000250"/>
    <property type="project" value="UniProtKB"/>
</dbReference>
<dbReference type="GO" id="GO:0003406">
    <property type="term" value="P:retinal pigment epithelium development"/>
    <property type="evidence" value="ECO:0000250"/>
    <property type="project" value="UniProtKB"/>
</dbReference>
<dbReference type="GO" id="GO:0120193">
    <property type="term" value="P:tight junction organization"/>
    <property type="evidence" value="ECO:0000266"/>
    <property type="project" value="RGD"/>
</dbReference>
<dbReference type="GO" id="GO:0007601">
    <property type="term" value="P:visual perception"/>
    <property type="evidence" value="ECO:0007669"/>
    <property type="project" value="UniProtKB-KW"/>
</dbReference>
<dbReference type="FunFam" id="1.20.140.150:FF:000001">
    <property type="entry name" value="Claudin"/>
    <property type="match status" value="1"/>
</dbReference>
<dbReference type="Gene3D" id="1.20.140.150">
    <property type="match status" value="1"/>
</dbReference>
<dbReference type="InterPro" id="IPR006187">
    <property type="entry name" value="Claudin"/>
</dbReference>
<dbReference type="InterPro" id="IPR017974">
    <property type="entry name" value="Claudin_CS"/>
</dbReference>
<dbReference type="InterPro" id="IPR004031">
    <property type="entry name" value="PMP22/EMP/MP20/Claudin"/>
</dbReference>
<dbReference type="PANTHER" id="PTHR12002">
    <property type="entry name" value="CLAUDIN"/>
    <property type="match status" value="1"/>
</dbReference>
<dbReference type="Pfam" id="PF00822">
    <property type="entry name" value="PMP22_Claudin"/>
    <property type="match status" value="1"/>
</dbReference>
<dbReference type="PRINTS" id="PR01077">
    <property type="entry name" value="CLAUDIN"/>
</dbReference>
<dbReference type="PROSITE" id="PS01346">
    <property type="entry name" value="CLAUDIN"/>
    <property type="match status" value="1"/>
</dbReference>
<evidence type="ECO:0000250" key="1">
    <source>
        <dbReference type="UniProtKB" id="Q8N6F1"/>
    </source>
</evidence>
<evidence type="ECO:0000250" key="2">
    <source>
        <dbReference type="UniProtKB" id="Q91Y55"/>
    </source>
</evidence>
<evidence type="ECO:0000250" key="3">
    <source>
        <dbReference type="UniProtKB" id="Q925N4"/>
    </source>
</evidence>
<evidence type="ECO:0000250" key="4">
    <source>
        <dbReference type="UniProtKB" id="Q9ET38"/>
    </source>
</evidence>
<evidence type="ECO:0000250" key="5">
    <source>
        <dbReference type="UniProtKB" id="Q9Y5I7"/>
    </source>
</evidence>
<evidence type="ECO:0000255" key="6"/>
<evidence type="ECO:0000303" key="7">
    <source>
    </source>
</evidence>
<evidence type="ECO:0000305" key="8"/>
<evidence type="ECO:0000312" key="9">
    <source>
        <dbReference type="RGD" id="1305000"/>
    </source>
</evidence>